<name>RPF2_CAEEL</name>
<organism>
    <name type="scientific">Caenorhabditis elegans</name>
    <dbReference type="NCBI Taxonomy" id="6239"/>
    <lineage>
        <taxon>Eukaryota</taxon>
        <taxon>Metazoa</taxon>
        <taxon>Ecdysozoa</taxon>
        <taxon>Nematoda</taxon>
        <taxon>Chromadorea</taxon>
        <taxon>Rhabditida</taxon>
        <taxon>Rhabditina</taxon>
        <taxon>Rhabditomorpha</taxon>
        <taxon>Rhabditoidea</taxon>
        <taxon>Rhabditidae</taxon>
        <taxon>Peloderinae</taxon>
        <taxon>Caenorhabditis</taxon>
    </lineage>
</organism>
<protein>
    <recommendedName>
        <fullName>Ribosome production factor 2 homolog</fullName>
    </recommendedName>
    <alternativeName>
        <fullName>Brix domain-containing protein 1 homolog</fullName>
    </alternativeName>
    <alternativeName>
        <fullName>Ribosome biogenesis protein RPF2 homolog</fullName>
    </alternativeName>
</protein>
<evidence type="ECO:0000250" key="1"/>
<evidence type="ECO:0000255" key="2">
    <source>
        <dbReference type="PROSITE-ProRule" id="PRU00034"/>
    </source>
</evidence>
<evidence type="ECO:0000305" key="3"/>
<feature type="chain" id="PRO_0000120225" description="Ribosome production factor 2 homolog">
    <location>
        <begin position="1"/>
        <end position="297"/>
    </location>
</feature>
<feature type="domain" description="Brix" evidence="2">
    <location>
        <begin position="28"/>
        <end position="232"/>
    </location>
</feature>
<proteinExistence type="inferred from homology"/>
<reference key="1">
    <citation type="journal article" date="1998" name="Science">
        <title>Genome sequence of the nematode C. elegans: a platform for investigating biology.</title>
        <authorList>
            <consortium name="The C. elegans sequencing consortium"/>
        </authorList>
    </citation>
    <scope>NUCLEOTIDE SEQUENCE [LARGE SCALE GENOMIC DNA]</scope>
    <source>
        <strain>Bristol N2</strain>
    </source>
</reference>
<keyword id="KW-0539">Nucleus</keyword>
<keyword id="KW-1185">Reference proteome</keyword>
<dbReference type="EMBL" id="FO081614">
    <property type="protein sequence ID" value="CCD72829.1"/>
    <property type="molecule type" value="Genomic_DNA"/>
</dbReference>
<dbReference type="RefSeq" id="NP_491117.1">
    <property type="nucleotide sequence ID" value="NM_058716.9"/>
</dbReference>
<dbReference type="SMR" id="Q9N3F0"/>
<dbReference type="BioGRID" id="37369">
    <property type="interactions" value="13"/>
</dbReference>
<dbReference type="FunCoup" id="Q9N3F0">
    <property type="interactions" value="2606"/>
</dbReference>
<dbReference type="STRING" id="6239.Y54E10A.10.2"/>
<dbReference type="PaxDb" id="6239-Y54E10A.10"/>
<dbReference type="PeptideAtlas" id="Q9N3F0"/>
<dbReference type="EnsemblMetazoa" id="Y54E10A.10.1">
    <property type="protein sequence ID" value="Y54E10A.10.1"/>
    <property type="gene ID" value="WBGene00021830"/>
</dbReference>
<dbReference type="GeneID" id="171892"/>
<dbReference type="KEGG" id="cel:CELE_Y54E10A.10"/>
<dbReference type="UCSC" id="Y54E10A.10.1">
    <property type="organism name" value="c. elegans"/>
</dbReference>
<dbReference type="AGR" id="WB:WBGene00021830"/>
<dbReference type="CTD" id="171892"/>
<dbReference type="WormBase" id="Y54E10A.10">
    <property type="protein sequence ID" value="CE24439"/>
    <property type="gene ID" value="WBGene00021830"/>
</dbReference>
<dbReference type="eggNOG" id="KOG3031">
    <property type="taxonomic scope" value="Eukaryota"/>
</dbReference>
<dbReference type="GeneTree" id="ENSGT00390000007279"/>
<dbReference type="HOGENOM" id="CLU_049783_1_1_1"/>
<dbReference type="InParanoid" id="Q9N3F0"/>
<dbReference type="OMA" id="VGLKPMF"/>
<dbReference type="OrthoDB" id="407658at2759"/>
<dbReference type="PhylomeDB" id="Q9N3F0"/>
<dbReference type="PRO" id="PR:Q9N3F0"/>
<dbReference type="Proteomes" id="UP000001940">
    <property type="component" value="Chromosome I"/>
</dbReference>
<dbReference type="Bgee" id="WBGene00021830">
    <property type="expression patterns" value="Expressed in larva and 4 other cell types or tissues"/>
</dbReference>
<dbReference type="GO" id="GO:0005730">
    <property type="term" value="C:nucleolus"/>
    <property type="evidence" value="ECO:0000318"/>
    <property type="project" value="GO_Central"/>
</dbReference>
<dbReference type="GO" id="GO:0019843">
    <property type="term" value="F:rRNA binding"/>
    <property type="evidence" value="ECO:0000318"/>
    <property type="project" value="GO_Central"/>
</dbReference>
<dbReference type="GO" id="GO:0000463">
    <property type="term" value="P:maturation of LSU-rRNA from tricistronic rRNA transcript (SSU-rRNA, 5.8S rRNA, LSU-rRNA)"/>
    <property type="evidence" value="ECO:0000318"/>
    <property type="project" value="GO_Central"/>
</dbReference>
<dbReference type="GO" id="GO:0000027">
    <property type="term" value="P:ribosomal large subunit assembly"/>
    <property type="evidence" value="ECO:0007669"/>
    <property type="project" value="InterPro"/>
</dbReference>
<dbReference type="InterPro" id="IPR007109">
    <property type="entry name" value="Brix"/>
</dbReference>
<dbReference type="InterPro" id="IPR039770">
    <property type="entry name" value="Rpf2"/>
</dbReference>
<dbReference type="PANTHER" id="PTHR12728">
    <property type="entry name" value="BRIX DOMAIN CONTAINING PROTEIN"/>
    <property type="match status" value="1"/>
</dbReference>
<dbReference type="PANTHER" id="PTHR12728:SF0">
    <property type="entry name" value="RIBOSOME PRODUCTION FACTOR 2 HOMOLOG"/>
    <property type="match status" value="1"/>
</dbReference>
<dbReference type="Pfam" id="PF04427">
    <property type="entry name" value="Brix"/>
    <property type="match status" value="1"/>
</dbReference>
<dbReference type="SMART" id="SM00879">
    <property type="entry name" value="Brix"/>
    <property type="match status" value="1"/>
</dbReference>
<dbReference type="PROSITE" id="PS50833">
    <property type="entry name" value="BRIX"/>
    <property type="match status" value="1"/>
</dbReference>
<comment type="subcellular location">
    <subcellularLocation>
        <location evidence="1">Nucleus</location>
        <location evidence="1">Nucleolus</location>
    </subcellularLocation>
</comment>
<comment type="similarity">
    <text evidence="3">Belongs to the RPF2 family.</text>
</comment>
<accession>Q9N3F0</accession>
<sequence length="297" mass="33460">MVRVEKIKTKKGKRVLVNRASKTVENDKKALFCRGAKTNEIISHAMMDLFDMKKPLTTKMDKHNPYHLFEDETPIVRAGSKFDTSLFVLGSNSKKKPNCLTFGRTYDGQLLDMAELRITSYKSSSNFEAAKMTLGSKPCVILEGAAFESDGDMKRIGNLMVDWFRGPKVDTVRLEGLETVIVFTALDETNLALRVYRPMLKKSATATPRVELAEMGPSISFEVMRKKLADDALFKLACKKPKALMKKRRKNLSEDVFGNQLARVHVGKQRTDDIQTRKVKALRKTPLVEAAPENAIE</sequence>
<gene>
    <name type="ORF">Y54E10A.10</name>
</gene>